<dbReference type="EC" id="6.3.4.2" evidence="1"/>
<dbReference type="EMBL" id="CP000108">
    <property type="protein sequence ID" value="ABB27368.1"/>
    <property type="molecule type" value="Genomic_DNA"/>
</dbReference>
<dbReference type="SMR" id="Q3ANY4"/>
<dbReference type="STRING" id="340177.Cag_0090"/>
<dbReference type="MEROPS" id="C26.964"/>
<dbReference type="KEGG" id="cch:Cag_0090"/>
<dbReference type="eggNOG" id="COG0504">
    <property type="taxonomic scope" value="Bacteria"/>
</dbReference>
<dbReference type="HOGENOM" id="CLU_011675_5_0_10"/>
<dbReference type="OrthoDB" id="9801107at2"/>
<dbReference type="UniPathway" id="UPA00159">
    <property type="reaction ID" value="UER00277"/>
</dbReference>
<dbReference type="GO" id="GO:0005829">
    <property type="term" value="C:cytosol"/>
    <property type="evidence" value="ECO:0007669"/>
    <property type="project" value="TreeGrafter"/>
</dbReference>
<dbReference type="GO" id="GO:0005524">
    <property type="term" value="F:ATP binding"/>
    <property type="evidence" value="ECO:0007669"/>
    <property type="project" value="UniProtKB-KW"/>
</dbReference>
<dbReference type="GO" id="GO:0003883">
    <property type="term" value="F:CTP synthase activity"/>
    <property type="evidence" value="ECO:0007669"/>
    <property type="project" value="UniProtKB-UniRule"/>
</dbReference>
<dbReference type="GO" id="GO:0004359">
    <property type="term" value="F:glutaminase activity"/>
    <property type="evidence" value="ECO:0007669"/>
    <property type="project" value="RHEA"/>
</dbReference>
<dbReference type="GO" id="GO:0042802">
    <property type="term" value="F:identical protein binding"/>
    <property type="evidence" value="ECO:0007669"/>
    <property type="project" value="TreeGrafter"/>
</dbReference>
<dbReference type="GO" id="GO:0046872">
    <property type="term" value="F:metal ion binding"/>
    <property type="evidence" value="ECO:0007669"/>
    <property type="project" value="UniProtKB-KW"/>
</dbReference>
<dbReference type="GO" id="GO:0044210">
    <property type="term" value="P:'de novo' CTP biosynthetic process"/>
    <property type="evidence" value="ECO:0007669"/>
    <property type="project" value="UniProtKB-UniRule"/>
</dbReference>
<dbReference type="GO" id="GO:0019856">
    <property type="term" value="P:pyrimidine nucleobase biosynthetic process"/>
    <property type="evidence" value="ECO:0007669"/>
    <property type="project" value="TreeGrafter"/>
</dbReference>
<dbReference type="CDD" id="cd03113">
    <property type="entry name" value="CTPS_N"/>
    <property type="match status" value="1"/>
</dbReference>
<dbReference type="CDD" id="cd01746">
    <property type="entry name" value="GATase1_CTP_Synthase"/>
    <property type="match status" value="1"/>
</dbReference>
<dbReference type="FunFam" id="3.40.50.300:FF:000009">
    <property type="entry name" value="CTP synthase"/>
    <property type="match status" value="1"/>
</dbReference>
<dbReference type="FunFam" id="3.40.50.880:FF:000002">
    <property type="entry name" value="CTP synthase"/>
    <property type="match status" value="1"/>
</dbReference>
<dbReference type="Gene3D" id="3.40.50.880">
    <property type="match status" value="1"/>
</dbReference>
<dbReference type="Gene3D" id="3.40.50.300">
    <property type="entry name" value="P-loop containing nucleotide triphosphate hydrolases"/>
    <property type="match status" value="1"/>
</dbReference>
<dbReference type="HAMAP" id="MF_01227">
    <property type="entry name" value="PyrG"/>
    <property type="match status" value="1"/>
</dbReference>
<dbReference type="InterPro" id="IPR029062">
    <property type="entry name" value="Class_I_gatase-like"/>
</dbReference>
<dbReference type="InterPro" id="IPR004468">
    <property type="entry name" value="CTP_synthase"/>
</dbReference>
<dbReference type="InterPro" id="IPR017456">
    <property type="entry name" value="CTP_synthase_N"/>
</dbReference>
<dbReference type="InterPro" id="IPR017926">
    <property type="entry name" value="GATASE"/>
</dbReference>
<dbReference type="InterPro" id="IPR033828">
    <property type="entry name" value="GATase1_CTP_Synthase"/>
</dbReference>
<dbReference type="InterPro" id="IPR027417">
    <property type="entry name" value="P-loop_NTPase"/>
</dbReference>
<dbReference type="NCBIfam" id="NF003792">
    <property type="entry name" value="PRK05380.1"/>
    <property type="match status" value="1"/>
</dbReference>
<dbReference type="NCBIfam" id="TIGR00337">
    <property type="entry name" value="PyrG"/>
    <property type="match status" value="1"/>
</dbReference>
<dbReference type="PANTHER" id="PTHR11550">
    <property type="entry name" value="CTP SYNTHASE"/>
    <property type="match status" value="1"/>
</dbReference>
<dbReference type="PANTHER" id="PTHR11550:SF0">
    <property type="entry name" value="CTP SYNTHASE-RELATED"/>
    <property type="match status" value="1"/>
</dbReference>
<dbReference type="Pfam" id="PF06418">
    <property type="entry name" value="CTP_synth_N"/>
    <property type="match status" value="1"/>
</dbReference>
<dbReference type="Pfam" id="PF00117">
    <property type="entry name" value="GATase"/>
    <property type="match status" value="1"/>
</dbReference>
<dbReference type="SUPFAM" id="SSF52317">
    <property type="entry name" value="Class I glutamine amidotransferase-like"/>
    <property type="match status" value="1"/>
</dbReference>
<dbReference type="SUPFAM" id="SSF52540">
    <property type="entry name" value="P-loop containing nucleoside triphosphate hydrolases"/>
    <property type="match status" value="1"/>
</dbReference>
<dbReference type="PROSITE" id="PS51273">
    <property type="entry name" value="GATASE_TYPE_1"/>
    <property type="match status" value="1"/>
</dbReference>
<organism>
    <name type="scientific">Chlorobium chlorochromatii (strain CaD3)</name>
    <dbReference type="NCBI Taxonomy" id="340177"/>
    <lineage>
        <taxon>Bacteria</taxon>
        <taxon>Pseudomonadati</taxon>
        <taxon>Chlorobiota</taxon>
        <taxon>Chlorobiia</taxon>
        <taxon>Chlorobiales</taxon>
        <taxon>Chlorobiaceae</taxon>
        <taxon>Chlorobium/Pelodictyon group</taxon>
        <taxon>Chlorobium</taxon>
    </lineage>
</organism>
<evidence type="ECO:0000255" key="1">
    <source>
        <dbReference type="HAMAP-Rule" id="MF_01227"/>
    </source>
</evidence>
<comment type="function">
    <text evidence="1">Catalyzes the ATP-dependent amination of UTP to CTP with either L-glutamine or ammonia as the source of nitrogen. Regulates intracellular CTP levels through interactions with the four ribonucleotide triphosphates.</text>
</comment>
<comment type="catalytic activity">
    <reaction evidence="1">
        <text>UTP + L-glutamine + ATP + H2O = CTP + L-glutamate + ADP + phosphate + 2 H(+)</text>
        <dbReference type="Rhea" id="RHEA:26426"/>
        <dbReference type="ChEBI" id="CHEBI:15377"/>
        <dbReference type="ChEBI" id="CHEBI:15378"/>
        <dbReference type="ChEBI" id="CHEBI:29985"/>
        <dbReference type="ChEBI" id="CHEBI:30616"/>
        <dbReference type="ChEBI" id="CHEBI:37563"/>
        <dbReference type="ChEBI" id="CHEBI:43474"/>
        <dbReference type="ChEBI" id="CHEBI:46398"/>
        <dbReference type="ChEBI" id="CHEBI:58359"/>
        <dbReference type="ChEBI" id="CHEBI:456216"/>
        <dbReference type="EC" id="6.3.4.2"/>
    </reaction>
</comment>
<comment type="catalytic activity">
    <reaction evidence="1">
        <text>L-glutamine + H2O = L-glutamate + NH4(+)</text>
        <dbReference type="Rhea" id="RHEA:15889"/>
        <dbReference type="ChEBI" id="CHEBI:15377"/>
        <dbReference type="ChEBI" id="CHEBI:28938"/>
        <dbReference type="ChEBI" id="CHEBI:29985"/>
        <dbReference type="ChEBI" id="CHEBI:58359"/>
    </reaction>
</comment>
<comment type="catalytic activity">
    <reaction evidence="1">
        <text>UTP + NH4(+) + ATP = CTP + ADP + phosphate + 2 H(+)</text>
        <dbReference type="Rhea" id="RHEA:16597"/>
        <dbReference type="ChEBI" id="CHEBI:15378"/>
        <dbReference type="ChEBI" id="CHEBI:28938"/>
        <dbReference type="ChEBI" id="CHEBI:30616"/>
        <dbReference type="ChEBI" id="CHEBI:37563"/>
        <dbReference type="ChEBI" id="CHEBI:43474"/>
        <dbReference type="ChEBI" id="CHEBI:46398"/>
        <dbReference type="ChEBI" id="CHEBI:456216"/>
    </reaction>
</comment>
<comment type="activity regulation">
    <text evidence="1">Allosterically activated by GTP, when glutamine is the substrate; GTP has no effect on the reaction when ammonia is the substrate. The allosteric effector GTP functions by stabilizing the protein conformation that binds the tetrahedral intermediate(s) formed during glutamine hydrolysis. Inhibited by the product CTP, via allosteric rather than competitive inhibition.</text>
</comment>
<comment type="pathway">
    <text evidence="1">Pyrimidine metabolism; CTP biosynthesis via de novo pathway; CTP from UDP: step 2/2.</text>
</comment>
<comment type="subunit">
    <text evidence="1">Homotetramer.</text>
</comment>
<comment type="miscellaneous">
    <text evidence="1">CTPSs have evolved a hybrid strategy for distinguishing between UTP and CTP. The overlapping regions of the product feedback inhibitory and substrate sites recognize a common feature in both compounds, the triphosphate moiety. To differentiate isosteric substrate and product pyrimidine rings, an additional pocket far from the expected kinase/ligase catalytic site, specifically recognizes the cytosine and ribose portions of the product inhibitor.</text>
</comment>
<comment type="similarity">
    <text evidence="1">Belongs to the CTP synthase family.</text>
</comment>
<keyword id="KW-0067">ATP-binding</keyword>
<keyword id="KW-0315">Glutamine amidotransferase</keyword>
<keyword id="KW-0436">Ligase</keyword>
<keyword id="KW-0460">Magnesium</keyword>
<keyword id="KW-0479">Metal-binding</keyword>
<keyword id="KW-0547">Nucleotide-binding</keyword>
<keyword id="KW-0665">Pyrimidine biosynthesis</keyword>
<reference key="1">
    <citation type="submission" date="2005-08" db="EMBL/GenBank/DDBJ databases">
        <title>Complete sequence of Chlorobium chlorochromatii CaD3.</title>
        <authorList>
            <consortium name="US DOE Joint Genome Institute"/>
            <person name="Copeland A."/>
            <person name="Lucas S."/>
            <person name="Lapidus A."/>
            <person name="Barry K."/>
            <person name="Detter J.C."/>
            <person name="Glavina T."/>
            <person name="Hammon N."/>
            <person name="Israni S."/>
            <person name="Pitluck S."/>
            <person name="Bryant D."/>
            <person name="Schmutz J."/>
            <person name="Larimer F."/>
            <person name="Land M."/>
            <person name="Kyrpides N."/>
            <person name="Ivanova N."/>
            <person name="Richardson P."/>
        </authorList>
    </citation>
    <scope>NUCLEOTIDE SEQUENCE [LARGE SCALE GENOMIC DNA]</scope>
    <source>
        <strain>CaD3</strain>
    </source>
</reference>
<gene>
    <name evidence="1" type="primary">pyrG</name>
    <name type="ordered locus">Cag_0090</name>
</gene>
<proteinExistence type="inferred from homology"/>
<feature type="chain" id="PRO_0000266093" description="CTP synthase">
    <location>
        <begin position="1"/>
        <end position="569"/>
    </location>
</feature>
<feature type="domain" description="Glutamine amidotransferase type-1" evidence="1">
    <location>
        <begin position="299"/>
        <end position="543"/>
    </location>
</feature>
<feature type="region of interest" description="Amidoligase domain" evidence="1">
    <location>
        <begin position="1"/>
        <end position="272"/>
    </location>
</feature>
<feature type="active site" description="Nucleophile; for glutamine hydrolysis" evidence="1">
    <location>
        <position position="390"/>
    </location>
</feature>
<feature type="active site" evidence="1">
    <location>
        <position position="516"/>
    </location>
</feature>
<feature type="active site" evidence="1">
    <location>
        <position position="518"/>
    </location>
</feature>
<feature type="binding site" evidence="1">
    <location>
        <position position="18"/>
    </location>
    <ligand>
        <name>CTP</name>
        <dbReference type="ChEBI" id="CHEBI:37563"/>
        <note>allosteric inhibitor</note>
    </ligand>
</feature>
<feature type="binding site" evidence="1">
    <location>
        <position position="18"/>
    </location>
    <ligand>
        <name>UTP</name>
        <dbReference type="ChEBI" id="CHEBI:46398"/>
    </ligand>
</feature>
<feature type="binding site" evidence="1">
    <location>
        <begin position="19"/>
        <end position="24"/>
    </location>
    <ligand>
        <name>ATP</name>
        <dbReference type="ChEBI" id="CHEBI:30616"/>
    </ligand>
</feature>
<feature type="binding site" evidence="1">
    <location>
        <position position="59"/>
    </location>
    <ligand>
        <name>L-glutamine</name>
        <dbReference type="ChEBI" id="CHEBI:58359"/>
    </ligand>
</feature>
<feature type="binding site" evidence="1">
    <location>
        <position position="76"/>
    </location>
    <ligand>
        <name>ATP</name>
        <dbReference type="ChEBI" id="CHEBI:30616"/>
    </ligand>
</feature>
<feature type="binding site" evidence="1">
    <location>
        <position position="76"/>
    </location>
    <ligand>
        <name>Mg(2+)</name>
        <dbReference type="ChEBI" id="CHEBI:18420"/>
    </ligand>
</feature>
<feature type="binding site" evidence="1">
    <location>
        <position position="146"/>
    </location>
    <ligand>
        <name>Mg(2+)</name>
        <dbReference type="ChEBI" id="CHEBI:18420"/>
    </ligand>
</feature>
<feature type="binding site" evidence="1">
    <location>
        <begin position="153"/>
        <end position="155"/>
    </location>
    <ligand>
        <name>CTP</name>
        <dbReference type="ChEBI" id="CHEBI:37563"/>
        <note>allosteric inhibitor</note>
    </ligand>
</feature>
<feature type="binding site" evidence="1">
    <location>
        <begin position="193"/>
        <end position="198"/>
    </location>
    <ligand>
        <name>CTP</name>
        <dbReference type="ChEBI" id="CHEBI:37563"/>
        <note>allosteric inhibitor</note>
    </ligand>
</feature>
<feature type="binding site" evidence="1">
    <location>
        <begin position="193"/>
        <end position="198"/>
    </location>
    <ligand>
        <name>UTP</name>
        <dbReference type="ChEBI" id="CHEBI:46398"/>
    </ligand>
</feature>
<feature type="binding site" evidence="1">
    <location>
        <position position="229"/>
    </location>
    <ligand>
        <name>CTP</name>
        <dbReference type="ChEBI" id="CHEBI:37563"/>
        <note>allosteric inhibitor</note>
    </ligand>
</feature>
<feature type="binding site" evidence="1">
    <location>
        <position position="229"/>
    </location>
    <ligand>
        <name>UTP</name>
        <dbReference type="ChEBI" id="CHEBI:46398"/>
    </ligand>
</feature>
<feature type="binding site" evidence="1">
    <location>
        <position position="363"/>
    </location>
    <ligand>
        <name>L-glutamine</name>
        <dbReference type="ChEBI" id="CHEBI:58359"/>
    </ligand>
</feature>
<feature type="binding site" evidence="1">
    <location>
        <begin position="391"/>
        <end position="394"/>
    </location>
    <ligand>
        <name>L-glutamine</name>
        <dbReference type="ChEBI" id="CHEBI:58359"/>
    </ligand>
</feature>
<feature type="binding site" evidence="1">
    <location>
        <position position="414"/>
    </location>
    <ligand>
        <name>L-glutamine</name>
        <dbReference type="ChEBI" id="CHEBI:58359"/>
    </ligand>
</feature>
<feature type="binding site" evidence="1">
    <location>
        <position position="471"/>
    </location>
    <ligand>
        <name>L-glutamine</name>
        <dbReference type="ChEBI" id="CHEBI:58359"/>
    </ligand>
</feature>
<sequence>MARPKNVKHIFVTGGVISSLGKGILSASLGMLLKSRGLRVAIQKYDPYINVDPGTMSPYQHGEVYVTDDGAETDLDLGHYERFLDESTSQTSNLTMGRVYKSVIDKERNGDYLGATVQVVPHVIDEIKERMAEQAKNSNLDILITEIGGTIGDIESLPFLEAMRELKLDMGDGNLINIHLTYVPYIKAASELKTKPTQHSVKMLLGVGIQPDILVCRSEKQLSRDIKNKVGHFCNLNDLDVIGLSDCATIYEVPLMLLQEELDSRVLKKLGIKGYQEPALTYWRDFCNKVKFPQEGEITIGICGKYTEYPDAYKSILEAFVHAGASNNVRVNVKLLRAESAEEPTFDFAKELAGIHAILVAPGFGDRGIEGKIRYIQYAREQNIPFFGICLGMQCATIEFARNVCDLQDANSTEFNKRARFAIIDLMEHQKKVKEKGGTMRLGSYPCIITDGSKAHMAYQKFLVNERHRHRYEFNNSFRTLFEERGMLFSGTSPNGELIEIVEIKNHRWFVGVQFHPELKSRVQKVHPLFHSFVAAAKDYARGVQQMDMAIEMPSFMPILNEEGESKSE</sequence>
<protein>
    <recommendedName>
        <fullName evidence="1">CTP synthase</fullName>
        <ecNumber evidence="1">6.3.4.2</ecNumber>
    </recommendedName>
    <alternativeName>
        <fullName evidence="1">Cytidine 5'-triphosphate synthase</fullName>
    </alternativeName>
    <alternativeName>
        <fullName evidence="1">Cytidine triphosphate synthetase</fullName>
        <shortName evidence="1">CTP synthetase</shortName>
        <shortName evidence="1">CTPS</shortName>
    </alternativeName>
    <alternativeName>
        <fullName evidence="1">UTP--ammonia ligase</fullName>
    </alternativeName>
</protein>
<accession>Q3ANY4</accession>
<name>PYRG_CHLCH</name>